<keyword id="KW-0560">Oxidoreductase</keyword>
<keyword id="KW-1185">Reference proteome</keyword>
<evidence type="ECO:0000255" key="1">
    <source>
        <dbReference type="HAMAP-Rule" id="MF_01401"/>
    </source>
</evidence>
<organism>
    <name type="scientific">Shigella dysenteriae serotype 1 (strain Sd197)</name>
    <dbReference type="NCBI Taxonomy" id="300267"/>
    <lineage>
        <taxon>Bacteria</taxon>
        <taxon>Pseudomonadati</taxon>
        <taxon>Pseudomonadota</taxon>
        <taxon>Gammaproteobacteria</taxon>
        <taxon>Enterobacterales</taxon>
        <taxon>Enterobacteriaceae</taxon>
        <taxon>Shigella</taxon>
    </lineage>
</organism>
<sequence>MSLFDKKHLVSPADALPGRNTPMPVATLHAVNGHSMTNVPDGMEIAIFAMGCFWGVERLFWQLPSVYSTAAGYTGGYTPNPTYREVCSGDTGHAEAVRIVYDPSVISYEQLLQIFWENHDPAQGMRQGNDHGTQYRSAIYPLTPEQDAAARASLERFQAAMLAADDDRRITTEIANATPFYYAEDDHQQYLHKNPYGYCGIGGIGVCLPPEA</sequence>
<name>MSRA_SHIDS</name>
<proteinExistence type="inferred from homology"/>
<comment type="function">
    <text evidence="1">Has an important function as a repair enzyme for proteins that have been inactivated by oxidation. Catalyzes the reversible oxidation-reduction of methionine sulfoxide in proteins to methionine.</text>
</comment>
<comment type="catalytic activity">
    <reaction evidence="1">
        <text>L-methionyl-[protein] + [thioredoxin]-disulfide + H2O = L-methionyl-(S)-S-oxide-[protein] + [thioredoxin]-dithiol</text>
        <dbReference type="Rhea" id="RHEA:14217"/>
        <dbReference type="Rhea" id="RHEA-COMP:10698"/>
        <dbReference type="Rhea" id="RHEA-COMP:10700"/>
        <dbReference type="Rhea" id="RHEA-COMP:12313"/>
        <dbReference type="Rhea" id="RHEA-COMP:12315"/>
        <dbReference type="ChEBI" id="CHEBI:15377"/>
        <dbReference type="ChEBI" id="CHEBI:16044"/>
        <dbReference type="ChEBI" id="CHEBI:29950"/>
        <dbReference type="ChEBI" id="CHEBI:44120"/>
        <dbReference type="ChEBI" id="CHEBI:50058"/>
        <dbReference type="EC" id="1.8.4.11"/>
    </reaction>
</comment>
<comment type="catalytic activity">
    <reaction evidence="1">
        <text>[thioredoxin]-disulfide + L-methionine + H2O = L-methionine (S)-S-oxide + [thioredoxin]-dithiol</text>
        <dbReference type="Rhea" id="RHEA:19993"/>
        <dbReference type="Rhea" id="RHEA-COMP:10698"/>
        <dbReference type="Rhea" id="RHEA-COMP:10700"/>
        <dbReference type="ChEBI" id="CHEBI:15377"/>
        <dbReference type="ChEBI" id="CHEBI:29950"/>
        <dbReference type="ChEBI" id="CHEBI:50058"/>
        <dbReference type="ChEBI" id="CHEBI:57844"/>
        <dbReference type="ChEBI" id="CHEBI:58772"/>
        <dbReference type="EC" id="1.8.4.11"/>
    </reaction>
</comment>
<comment type="similarity">
    <text evidence="1">Belongs to the MsrA Met sulfoxide reductase family.</text>
</comment>
<reference key="1">
    <citation type="journal article" date="2005" name="Nucleic Acids Res.">
        <title>Genome dynamics and diversity of Shigella species, the etiologic agents of bacillary dysentery.</title>
        <authorList>
            <person name="Yang F."/>
            <person name="Yang J."/>
            <person name="Zhang X."/>
            <person name="Chen L."/>
            <person name="Jiang Y."/>
            <person name="Yan Y."/>
            <person name="Tang X."/>
            <person name="Wang J."/>
            <person name="Xiong Z."/>
            <person name="Dong J."/>
            <person name="Xue Y."/>
            <person name="Zhu Y."/>
            <person name="Xu X."/>
            <person name="Sun L."/>
            <person name="Chen S."/>
            <person name="Nie H."/>
            <person name="Peng J."/>
            <person name="Xu J."/>
            <person name="Wang Y."/>
            <person name="Yuan Z."/>
            <person name="Wen Y."/>
            <person name="Yao Z."/>
            <person name="Shen Y."/>
            <person name="Qiang B."/>
            <person name="Hou Y."/>
            <person name="Yu J."/>
            <person name="Jin Q."/>
        </authorList>
    </citation>
    <scope>NUCLEOTIDE SEQUENCE [LARGE SCALE GENOMIC DNA]</scope>
    <source>
        <strain>Sd197</strain>
    </source>
</reference>
<gene>
    <name evidence="1" type="primary">msrA</name>
    <name type="ordered locus">SDY_4456</name>
</gene>
<protein>
    <recommendedName>
        <fullName evidence="1">Peptide methionine sulfoxide reductase MsrA</fullName>
        <shortName evidence="1">Protein-methionine-S-oxide reductase</shortName>
        <ecNumber evidence="1">1.8.4.11</ecNumber>
    </recommendedName>
    <alternativeName>
        <fullName evidence="1">Peptide-methionine (S)-S-oxide reductase</fullName>
        <shortName evidence="1">Peptide Met(O) reductase</shortName>
    </alternativeName>
</protein>
<feature type="chain" id="PRO_1000068360" description="Peptide methionine sulfoxide reductase MsrA">
    <location>
        <begin position="1"/>
        <end position="212"/>
    </location>
</feature>
<feature type="active site" evidence="1">
    <location>
        <position position="52"/>
    </location>
</feature>
<dbReference type="EC" id="1.8.4.11" evidence="1"/>
<dbReference type="EMBL" id="CP000034">
    <property type="protein sequence ID" value="ABB64337.1"/>
    <property type="molecule type" value="Genomic_DNA"/>
</dbReference>
<dbReference type="RefSeq" id="WP_005021358.1">
    <property type="nucleotide sequence ID" value="NC_007606.1"/>
</dbReference>
<dbReference type="RefSeq" id="YP_405828.1">
    <property type="nucleotide sequence ID" value="NC_007606.1"/>
</dbReference>
<dbReference type="SMR" id="Q328B8"/>
<dbReference type="STRING" id="300267.SDY_4456"/>
<dbReference type="EnsemblBacteria" id="ABB64337">
    <property type="protein sequence ID" value="ABB64337"/>
    <property type="gene ID" value="SDY_4456"/>
</dbReference>
<dbReference type="KEGG" id="sdy:SDY_4456"/>
<dbReference type="PATRIC" id="fig|300267.13.peg.5257"/>
<dbReference type="HOGENOM" id="CLU_031040_10_3_6"/>
<dbReference type="Proteomes" id="UP000002716">
    <property type="component" value="Chromosome"/>
</dbReference>
<dbReference type="GO" id="GO:0005737">
    <property type="term" value="C:cytoplasm"/>
    <property type="evidence" value="ECO:0007669"/>
    <property type="project" value="TreeGrafter"/>
</dbReference>
<dbReference type="GO" id="GO:0036456">
    <property type="term" value="F:L-methionine-(S)-S-oxide reductase activity"/>
    <property type="evidence" value="ECO:0007669"/>
    <property type="project" value="TreeGrafter"/>
</dbReference>
<dbReference type="GO" id="GO:0008113">
    <property type="term" value="F:peptide-methionine (S)-S-oxide reductase activity"/>
    <property type="evidence" value="ECO:0007669"/>
    <property type="project" value="UniProtKB-UniRule"/>
</dbReference>
<dbReference type="GO" id="GO:0034599">
    <property type="term" value="P:cellular response to oxidative stress"/>
    <property type="evidence" value="ECO:0007669"/>
    <property type="project" value="TreeGrafter"/>
</dbReference>
<dbReference type="GO" id="GO:0036211">
    <property type="term" value="P:protein modification process"/>
    <property type="evidence" value="ECO:0007669"/>
    <property type="project" value="UniProtKB-UniRule"/>
</dbReference>
<dbReference type="FunFam" id="3.30.1060.10:FF:000001">
    <property type="entry name" value="Peptide methionine sulfoxide reductase MsrA"/>
    <property type="match status" value="1"/>
</dbReference>
<dbReference type="Gene3D" id="3.30.1060.10">
    <property type="entry name" value="Peptide methionine sulphoxide reductase MsrA"/>
    <property type="match status" value="1"/>
</dbReference>
<dbReference type="HAMAP" id="MF_01401">
    <property type="entry name" value="MsrA"/>
    <property type="match status" value="1"/>
</dbReference>
<dbReference type="InterPro" id="IPR002569">
    <property type="entry name" value="Met_Sox_Rdtase_MsrA_dom"/>
</dbReference>
<dbReference type="InterPro" id="IPR036509">
    <property type="entry name" value="Met_Sox_Rdtase_MsrA_sf"/>
</dbReference>
<dbReference type="InterPro" id="IPR050162">
    <property type="entry name" value="MsrA_MetSO_reductase"/>
</dbReference>
<dbReference type="NCBIfam" id="TIGR00401">
    <property type="entry name" value="msrA"/>
    <property type="match status" value="1"/>
</dbReference>
<dbReference type="PANTHER" id="PTHR42799">
    <property type="entry name" value="MITOCHONDRIAL PEPTIDE METHIONINE SULFOXIDE REDUCTASE"/>
    <property type="match status" value="1"/>
</dbReference>
<dbReference type="PANTHER" id="PTHR42799:SF2">
    <property type="entry name" value="MITOCHONDRIAL PEPTIDE METHIONINE SULFOXIDE REDUCTASE"/>
    <property type="match status" value="1"/>
</dbReference>
<dbReference type="Pfam" id="PF01625">
    <property type="entry name" value="PMSR"/>
    <property type="match status" value="1"/>
</dbReference>
<dbReference type="SUPFAM" id="SSF55068">
    <property type="entry name" value="Peptide methionine sulfoxide reductase"/>
    <property type="match status" value="1"/>
</dbReference>
<accession>Q328B8</accession>